<keyword id="KW-0002">3D-structure</keyword>
<keyword id="KW-0963">Cytoplasm</keyword>
<keyword id="KW-0418">Kinase</keyword>
<keyword id="KW-0597">Phosphoprotein</keyword>
<keyword id="KW-0598">Phosphotransferase system</keyword>
<keyword id="KW-0762">Sugar transport</keyword>
<keyword id="KW-0808">Transferase</keyword>
<keyword id="KW-0813">Transport</keyword>
<sequence>MQITLARIDDRLIHGQVTTVWSKVANAQRIIICNDDVFNDEVRRTLLRQAAPPGMKVNVVSLEKAVAVYHNPQYQDETVFYLFTNPHDVLTMVRQGVQIATLNIGGMAWRPGKKQLTKAVSLDPQDIQAFRELDKLGVKLDLRVVASDPSVNILDKINETAFCE</sequence>
<protein>
    <recommendedName>
        <fullName evidence="5">PTS system sorbose-specific EIIB component</fullName>
    </recommendedName>
    <alternativeName>
        <fullName evidence="5">EIIB-Sor</fullName>
    </alternativeName>
    <alternativeName>
        <fullName>EIII-B-Sor</fullName>
    </alternativeName>
    <alternativeName>
        <fullName evidence="5">Sorbose-specific phosphotransferase enzyme IIB component</fullName>
        <ecNumber evidence="9">2.7.1.206</ecNumber>
    </alternativeName>
</protein>
<feature type="chain" id="PRO_0000186666" description="PTS system sorbose-specific EIIB component">
    <location>
        <begin position="1"/>
        <end position="164"/>
    </location>
</feature>
<feature type="domain" description="PTS EIIB type-4" evidence="1">
    <location>
        <begin position="1"/>
        <end position="164"/>
    </location>
</feature>
<feature type="active site" description="Pros-phosphohistidine intermediate" evidence="7">
    <location>
        <position position="14"/>
    </location>
</feature>
<feature type="modified residue" description="Phosphohistidine; by EIIA" evidence="1">
    <location>
        <position position="14"/>
    </location>
</feature>
<feature type="strand" evidence="11">
    <location>
        <begin position="2"/>
        <end position="9"/>
    </location>
</feature>
<feature type="helix" evidence="11">
    <location>
        <begin position="15"/>
        <end position="25"/>
    </location>
</feature>
<feature type="strand" evidence="11">
    <location>
        <begin position="28"/>
        <end position="33"/>
    </location>
</feature>
<feature type="helix" evidence="11">
    <location>
        <begin position="35"/>
        <end position="38"/>
    </location>
</feature>
<feature type="helix" evidence="11">
    <location>
        <begin position="41"/>
        <end position="49"/>
    </location>
</feature>
<feature type="strand" evidence="11">
    <location>
        <begin position="56"/>
        <end position="60"/>
    </location>
</feature>
<feature type="helix" evidence="11">
    <location>
        <begin position="62"/>
        <end position="69"/>
    </location>
</feature>
<feature type="helix" evidence="11">
    <location>
        <begin position="72"/>
        <end position="74"/>
    </location>
</feature>
<feature type="strand" evidence="11">
    <location>
        <begin position="78"/>
        <end position="85"/>
    </location>
</feature>
<feature type="helix" evidence="11">
    <location>
        <begin position="86"/>
        <end position="93"/>
    </location>
</feature>
<feature type="turn" evidence="11">
    <location>
        <begin position="94"/>
        <end position="96"/>
    </location>
</feature>
<feature type="strand" evidence="11">
    <location>
        <begin position="100"/>
        <end position="107"/>
    </location>
</feature>
<feature type="strand" evidence="11">
    <location>
        <begin position="114"/>
        <end position="117"/>
    </location>
</feature>
<feature type="strand" evidence="11">
    <location>
        <begin position="120"/>
        <end position="122"/>
    </location>
</feature>
<feature type="helix" evidence="11">
    <location>
        <begin position="124"/>
        <end position="135"/>
    </location>
</feature>
<feature type="strand" evidence="11">
    <location>
        <begin position="139"/>
        <end position="142"/>
    </location>
</feature>
<feature type="helix" evidence="11">
    <location>
        <begin position="153"/>
        <end position="158"/>
    </location>
</feature>
<comment type="function">
    <text evidence="4 8 10">The phosphoenolpyruvate-dependent sugar phosphotransferase system (PTS), a major carbohydrate active transport system, catalyzes the phosphorylation of incoming sugar substrates concomitant with their translocation across the cell membrane. The enzyme II SorABFM PTS system is involved in L-sorbose transport.</text>
</comment>
<comment type="catalytic activity">
    <reaction evidence="9">
        <text>keto-L-sorbose(out) + N(pros)-phospho-L-histidyl-[protein] = L-sorbose 1-phosphate(in) + L-histidyl-[protein]</text>
        <dbReference type="Rhea" id="RHEA:49296"/>
        <dbReference type="Rhea" id="RHEA-COMP:9745"/>
        <dbReference type="Rhea" id="RHEA-COMP:9746"/>
        <dbReference type="ChEBI" id="CHEBI:13172"/>
        <dbReference type="ChEBI" id="CHEBI:29979"/>
        <dbReference type="ChEBI" id="CHEBI:64837"/>
        <dbReference type="ChEBI" id="CHEBI:137409"/>
        <dbReference type="EC" id="2.7.1.206"/>
    </reaction>
</comment>
<comment type="biophysicochemical properties">
    <kinetics>
        <KM evidence="4">30 uM for L-sorbose</KM>
    </kinetics>
</comment>
<comment type="subunit">
    <text evidence="2">Dimer of dimers.</text>
</comment>
<comment type="subcellular location">
    <subcellularLocation>
        <location evidence="6">Cytoplasm</location>
    </subcellularLocation>
</comment>
<comment type="induction">
    <text evidence="3">By L-sorbose.</text>
</comment>
<comment type="domain">
    <text evidence="1">The PTS EIIB type-4 domain is phosphorylated by phospho-EIIA on a histidyl residue. Then, it transfers the phosphoryl group to the sugar substrate concomitantly with the sugar uptake processed by the PTS EIIC type-4 domain.</text>
</comment>
<organism>
    <name type="scientific">Klebsiella pneumoniae</name>
    <dbReference type="NCBI Taxonomy" id="573"/>
    <lineage>
        <taxon>Bacteria</taxon>
        <taxon>Pseudomonadati</taxon>
        <taxon>Pseudomonadota</taxon>
        <taxon>Gammaproteobacteria</taxon>
        <taxon>Enterobacterales</taxon>
        <taxon>Enterobacteriaceae</taxon>
        <taxon>Klebsiella/Raoultella group</taxon>
        <taxon>Klebsiella</taxon>
        <taxon>Klebsiella pneumoniae complex</taxon>
    </lineage>
</organism>
<dbReference type="EC" id="2.7.1.206" evidence="9"/>
<dbReference type="EMBL" id="X66059">
    <property type="protein sequence ID" value="CAA46858.1"/>
    <property type="molecule type" value="Genomic_DNA"/>
</dbReference>
<dbReference type="PIR" id="S50188">
    <property type="entry name" value="S50188"/>
</dbReference>
<dbReference type="RefSeq" id="WP_004151751.1">
    <property type="nucleotide sequence ID" value="NZ_WYAL01000049.1"/>
</dbReference>
<dbReference type="PDB" id="1NRZ">
    <property type="method" value="X-ray"/>
    <property type="resolution" value="1.75 A"/>
    <property type="chains" value="A/B/C/D=1-164"/>
</dbReference>
<dbReference type="PDBsum" id="1NRZ"/>
<dbReference type="SMR" id="P37081"/>
<dbReference type="TCDB" id="4.A.6.1.3">
    <property type="family name" value="the pts mannose-fructose-sorbose (man) family"/>
</dbReference>
<dbReference type="OMA" id="GQVITTW"/>
<dbReference type="SABIO-RK" id="P37081"/>
<dbReference type="EvolutionaryTrace" id="P37081"/>
<dbReference type="GO" id="GO:0005737">
    <property type="term" value="C:cytoplasm"/>
    <property type="evidence" value="ECO:0007669"/>
    <property type="project" value="UniProtKB-SubCell"/>
</dbReference>
<dbReference type="GO" id="GO:0016301">
    <property type="term" value="F:kinase activity"/>
    <property type="evidence" value="ECO:0007669"/>
    <property type="project" value="UniProtKB-KW"/>
</dbReference>
<dbReference type="GO" id="GO:0022871">
    <property type="term" value="F:protein-N(PI)-phosphohistidine-sorbose phosphotransferase system transporter activity"/>
    <property type="evidence" value="ECO:0007669"/>
    <property type="project" value="UniProtKB-EC"/>
</dbReference>
<dbReference type="GO" id="GO:0009401">
    <property type="term" value="P:phosphoenolpyruvate-dependent sugar phosphotransferase system"/>
    <property type="evidence" value="ECO:0007669"/>
    <property type="project" value="UniProtKB-KW"/>
</dbReference>
<dbReference type="CDD" id="cd00001">
    <property type="entry name" value="PTS_IIB_man"/>
    <property type="match status" value="1"/>
</dbReference>
<dbReference type="Gene3D" id="3.40.35.10">
    <property type="entry name" value="Phosphotransferase system, sorbose subfamily IIB component"/>
    <property type="match status" value="1"/>
</dbReference>
<dbReference type="InterPro" id="IPR004720">
    <property type="entry name" value="PTS_IIB_sorbose-sp"/>
</dbReference>
<dbReference type="InterPro" id="IPR036667">
    <property type="entry name" value="PTS_IIB_sorbose-sp_sf"/>
</dbReference>
<dbReference type="InterPro" id="IPR018455">
    <property type="entry name" value="PTS_IIB_sorbose-sp_subgr"/>
</dbReference>
<dbReference type="NCBIfam" id="TIGR00854">
    <property type="entry name" value="pts-sorbose"/>
    <property type="match status" value="1"/>
</dbReference>
<dbReference type="Pfam" id="PF03830">
    <property type="entry name" value="PTSIIB_sorb"/>
    <property type="match status" value="1"/>
</dbReference>
<dbReference type="SUPFAM" id="SSF52728">
    <property type="entry name" value="PTS IIb component"/>
    <property type="match status" value="1"/>
</dbReference>
<dbReference type="PROSITE" id="PS51101">
    <property type="entry name" value="PTS_EIIB_TYPE_4"/>
    <property type="match status" value="1"/>
</dbReference>
<evidence type="ECO:0000255" key="1">
    <source>
        <dbReference type="PROSITE-ProRule" id="PRU00424"/>
    </source>
</evidence>
<evidence type="ECO:0000269" key="2">
    <source>
    </source>
</evidence>
<evidence type="ECO:0000269" key="3">
    <source>
    </source>
</evidence>
<evidence type="ECO:0000269" key="4">
    <source>
    </source>
</evidence>
<evidence type="ECO:0000303" key="5">
    <source>
    </source>
</evidence>
<evidence type="ECO:0000305" key="6"/>
<evidence type="ECO:0000305" key="7">
    <source>
    </source>
</evidence>
<evidence type="ECO:0000305" key="8">
    <source>
    </source>
</evidence>
<evidence type="ECO:0000305" key="9">
    <source>
    </source>
</evidence>
<evidence type="ECO:0000305" key="10">
    <source>
    </source>
</evidence>
<evidence type="ECO:0007829" key="11">
    <source>
        <dbReference type="PDB" id="1NRZ"/>
    </source>
</evidence>
<gene>
    <name evidence="5" type="primary">sorB</name>
</gene>
<proteinExistence type="evidence at protein level"/>
<reference key="1">
    <citation type="journal article" date="1994" name="Biochim. Biophys. Acta">
        <title>Sequence of the sor-operon for L-sorbose utilization from Klebsiella pneumoniae KAY2026.</title>
        <authorList>
            <person name="Wehmeier U.F."/>
            <person name="Lengeler J.W."/>
        </authorList>
    </citation>
    <scope>NUCLEOTIDE SEQUENCE [GENOMIC DNA]</scope>
    <scope>FUNCTION</scope>
    <source>
        <strain>1033-5P14 / KAY2026</strain>
    </source>
</reference>
<reference key="2">
    <citation type="journal article" date="1995" name="Mol. Gen. Genet.">
        <title>Molecular analysis of the phosphoenolpyruvate-dependent L-sorbose: phosphotransferase system from Klebsiella pneumoniae and of its multidomain structure.</title>
        <authorList>
            <person name="Wehmeier U.F."/>
            <person name="Wohrl B.M."/>
            <person name="Lengeler J.W."/>
        </authorList>
    </citation>
    <scope>NUCLEOTIDE SEQUENCE [GENOMIC DNA]</scope>
</reference>
<reference key="3">
    <citation type="journal article" date="1984" name="J. Bacteriol.">
        <title>L-Sorbose metabolism in Klebsiella pneumoniae and Sor+ derivatives of Escherichia coli K-12 and chemotaxis toward sorbose.</title>
        <authorList>
            <person name="Sprenger G.A."/>
            <person name="Lengeler J.W."/>
        </authorList>
    </citation>
    <scope>FUNCTION</scope>
    <scope>CATALYTIC ACTIVITY</scope>
    <scope>BIOPHYSICOCHEMICAL PROPERTIES</scope>
    <source>
        <strain>1033-5P14 / KAY2026</strain>
    </source>
</reference>
<reference key="4">
    <citation type="journal article" date="1990" name="Mol. Microbiol.">
        <title>Cloning and physical mapping of the sor genes for L-sorbose transport and metabolism from Klebsiella pneumoniae.</title>
        <authorList>
            <person name="Woehrl B.M."/>
            <person name="Lengeler J.W."/>
        </authorList>
    </citation>
    <scope>FUNCTION</scope>
    <scope>INDUCTION</scope>
</reference>
<reference key="5">
    <citation type="journal article" date="2003" name="J. Mol. Biol.">
        <title>Crystal structure of the IIB(Sor) domain of the sorbose permease from Klebsiella pneumoniae solved to 1.75A resolution.</title>
        <authorList>
            <person name="Orriss G.L."/>
            <person name="Erni B."/>
            <person name="Schirmer T."/>
        </authorList>
    </citation>
    <scope>X-RAY CRYSTALLOGRAPHY (1.75 ANGSTROMS)</scope>
    <scope>ACTIVE SITE</scope>
    <scope>SUBUNIT</scope>
</reference>
<accession>P37081</accession>
<name>PTRB_KLEPN</name>